<evidence type="ECO:0000305" key="1"/>
<dbReference type="EMBL" id="AE000783">
    <property type="protein sequence ID" value="AAC66484.1"/>
    <property type="molecule type" value="Genomic_DNA"/>
</dbReference>
<dbReference type="PIR" id="E70111">
    <property type="entry name" value="E70111"/>
</dbReference>
<dbReference type="RefSeq" id="NP_212227.1">
    <property type="nucleotide sequence ID" value="NC_001318.1"/>
</dbReference>
<dbReference type="RefSeq" id="WP_002556695.1">
    <property type="nucleotide sequence ID" value="NC_001318.1"/>
</dbReference>
<dbReference type="SMR" id="O51120"/>
<dbReference type="STRING" id="224326.BB_0093"/>
<dbReference type="PaxDb" id="224326-BB_0093"/>
<dbReference type="EnsemblBacteria" id="AAC66484">
    <property type="protein sequence ID" value="AAC66484"/>
    <property type="gene ID" value="BB_0093"/>
</dbReference>
<dbReference type="KEGG" id="bbu:BB_0093"/>
<dbReference type="PATRIC" id="fig|224326.49.peg.491"/>
<dbReference type="HOGENOM" id="CLU_022916_2_0_12"/>
<dbReference type="OrthoDB" id="9802718at2"/>
<dbReference type="Proteomes" id="UP000001807">
    <property type="component" value="Chromosome"/>
</dbReference>
<dbReference type="GO" id="GO:0005524">
    <property type="term" value="F:ATP binding"/>
    <property type="evidence" value="ECO:0007669"/>
    <property type="project" value="UniProtKB-UniRule"/>
</dbReference>
<dbReference type="GO" id="GO:0046933">
    <property type="term" value="F:proton-transporting ATP synthase activity, rotational mechanism"/>
    <property type="evidence" value="ECO:0007669"/>
    <property type="project" value="UniProtKB-UniRule"/>
</dbReference>
<dbReference type="GO" id="GO:0042777">
    <property type="term" value="P:proton motive force-driven plasma membrane ATP synthesis"/>
    <property type="evidence" value="ECO:0007669"/>
    <property type="project" value="UniProtKB-UniRule"/>
</dbReference>
<dbReference type="CDD" id="cd18118">
    <property type="entry name" value="ATP-synt_V_A-type_beta_N"/>
    <property type="match status" value="1"/>
</dbReference>
<dbReference type="CDD" id="cd01135">
    <property type="entry name" value="V_A-ATPase_B"/>
    <property type="match status" value="1"/>
</dbReference>
<dbReference type="Gene3D" id="3.40.50.12240">
    <property type="match status" value="1"/>
</dbReference>
<dbReference type="HAMAP" id="MF_00310">
    <property type="entry name" value="ATP_synth_B_arch"/>
    <property type="match status" value="1"/>
</dbReference>
<dbReference type="InterPro" id="IPR055190">
    <property type="entry name" value="ATP-synt_VA_C"/>
</dbReference>
<dbReference type="InterPro" id="IPR004100">
    <property type="entry name" value="ATPase_F1/V1/A1_a/bsu_N"/>
</dbReference>
<dbReference type="InterPro" id="IPR000194">
    <property type="entry name" value="ATPase_F1/V1/A1_a/bsu_nucl-bd"/>
</dbReference>
<dbReference type="InterPro" id="IPR027417">
    <property type="entry name" value="P-loop_NTPase"/>
</dbReference>
<dbReference type="InterPro" id="IPR022879">
    <property type="entry name" value="V-ATPase_su_B/beta"/>
</dbReference>
<dbReference type="NCBIfam" id="NF002555">
    <property type="entry name" value="PRK02118.1"/>
    <property type="match status" value="1"/>
</dbReference>
<dbReference type="NCBIfam" id="NF003235">
    <property type="entry name" value="PRK04196.1"/>
    <property type="match status" value="1"/>
</dbReference>
<dbReference type="PANTHER" id="PTHR43389">
    <property type="entry name" value="V-TYPE PROTON ATPASE SUBUNIT B"/>
    <property type="match status" value="1"/>
</dbReference>
<dbReference type="PANTHER" id="PTHR43389:SF4">
    <property type="entry name" value="V-TYPE PROTON ATPASE SUBUNIT B"/>
    <property type="match status" value="1"/>
</dbReference>
<dbReference type="Pfam" id="PF00006">
    <property type="entry name" value="ATP-synt_ab"/>
    <property type="match status" value="1"/>
</dbReference>
<dbReference type="Pfam" id="PF02874">
    <property type="entry name" value="ATP-synt_ab_N"/>
    <property type="match status" value="1"/>
</dbReference>
<dbReference type="Pfam" id="PF22919">
    <property type="entry name" value="ATP-synt_VA_C"/>
    <property type="match status" value="1"/>
</dbReference>
<dbReference type="SUPFAM" id="SSF52540">
    <property type="entry name" value="P-loop containing nucleoside triphosphate hydrolases"/>
    <property type="match status" value="1"/>
</dbReference>
<sequence length="434" mass="48026">MKRVYSKIESIAGNVITVTAQGIKYGELAIVKAKDTSSLAEVIKLDREKVSLQVYGGTRGVSTSDEIKFLGHSMQVSFSDNLLGRIFDGSGNPRDGGPSLDDNLIEIGGPSANPTKRIVPRNMIRTGLPMIDVFNTLVESQKLPIFSVSGEPYNELLIRIALQAEVDLIILGGMGLKHDDYLTFKDSLEKGGALSRAIFFVHTANDSVVESLTVPDISLSVAEKFALKGKKVLVLLTDMTNFADAMKEISITMEQVPSNRGYPGDLYSQLAYRYEKAIDFEGAGSITILAVTTMPGDDVTHPVPDNTGYITEGQYYLKGGRIEPFGSLSRLKQMVNSRTRDDHRTIMDSMIKLYASSKESVEKKAMGFNMTKWDEKLLKYSNMFESKMMDLSVNIPLEEALDLGWSILASCFSPKETGIKTDLIEKYWPKKETY</sequence>
<comment type="function">
    <text>Produces ATP from ADP in the presence of a proton gradient across the membrane. The V-type beta chain is a regulatory subunit.</text>
</comment>
<comment type="similarity">
    <text evidence="1">Belongs to the ATPase alpha/beta chains family.</text>
</comment>
<gene>
    <name type="primary">atpB</name>
    <name type="ordered locus">BB_0093</name>
</gene>
<keyword id="KW-0066">ATP synthesis</keyword>
<keyword id="KW-0375">Hydrogen ion transport</keyword>
<keyword id="KW-0406">Ion transport</keyword>
<keyword id="KW-1185">Reference proteome</keyword>
<keyword id="KW-0813">Transport</keyword>
<proteinExistence type="inferred from homology"/>
<name>VATB_BORBU</name>
<reference key="1">
    <citation type="journal article" date="1997" name="Nature">
        <title>Genomic sequence of a Lyme disease spirochaete, Borrelia burgdorferi.</title>
        <authorList>
            <person name="Fraser C.M."/>
            <person name="Casjens S."/>
            <person name="Huang W.M."/>
            <person name="Sutton G.G."/>
            <person name="Clayton R.A."/>
            <person name="Lathigra R."/>
            <person name="White O."/>
            <person name="Ketchum K.A."/>
            <person name="Dodson R.J."/>
            <person name="Hickey E.K."/>
            <person name="Gwinn M.L."/>
            <person name="Dougherty B.A."/>
            <person name="Tomb J.-F."/>
            <person name="Fleischmann R.D."/>
            <person name="Richardson D.L."/>
            <person name="Peterson J.D."/>
            <person name="Kerlavage A.R."/>
            <person name="Quackenbush J."/>
            <person name="Salzberg S.L."/>
            <person name="Hanson M."/>
            <person name="van Vugt R."/>
            <person name="Palmer N."/>
            <person name="Adams M.D."/>
            <person name="Gocayne J.D."/>
            <person name="Weidman J.F."/>
            <person name="Utterback T.R."/>
            <person name="Watthey L."/>
            <person name="McDonald L.A."/>
            <person name="Artiach P."/>
            <person name="Bowman C."/>
            <person name="Garland S.A."/>
            <person name="Fujii C."/>
            <person name="Cotton M.D."/>
            <person name="Horst K."/>
            <person name="Roberts K.M."/>
            <person name="Hatch B."/>
            <person name="Smith H.O."/>
            <person name="Venter J.C."/>
        </authorList>
    </citation>
    <scope>NUCLEOTIDE SEQUENCE [LARGE SCALE GENOMIC DNA]</scope>
    <source>
        <strain>ATCC 35210 / DSM 4680 / CIP 102532 / B31</strain>
    </source>
</reference>
<accession>O51120</accession>
<organism>
    <name type="scientific">Borreliella burgdorferi (strain ATCC 35210 / DSM 4680 / CIP 102532 / B31)</name>
    <name type="common">Borrelia burgdorferi</name>
    <dbReference type="NCBI Taxonomy" id="224326"/>
    <lineage>
        <taxon>Bacteria</taxon>
        <taxon>Pseudomonadati</taxon>
        <taxon>Spirochaetota</taxon>
        <taxon>Spirochaetia</taxon>
        <taxon>Spirochaetales</taxon>
        <taxon>Borreliaceae</taxon>
        <taxon>Borreliella</taxon>
    </lineage>
</organism>
<feature type="chain" id="PRO_0000144672" description="V-type ATP synthase beta chain">
    <location>
        <begin position="1"/>
        <end position="434"/>
    </location>
</feature>
<protein>
    <recommendedName>
        <fullName>V-type ATP synthase beta chain</fullName>
    </recommendedName>
    <alternativeName>
        <fullName>V-ATPase subunit B</fullName>
    </alternativeName>
</protein>